<name>RNH_MARN8</name>
<evidence type="ECO:0000255" key="1">
    <source>
        <dbReference type="HAMAP-Rule" id="MF_00042"/>
    </source>
</evidence>
<evidence type="ECO:0000255" key="2">
    <source>
        <dbReference type="PROSITE-ProRule" id="PRU00408"/>
    </source>
</evidence>
<proteinExistence type="inferred from homology"/>
<dbReference type="EC" id="3.1.26.4" evidence="1"/>
<dbReference type="EMBL" id="CP000514">
    <property type="protein sequence ID" value="ABM18618.1"/>
    <property type="molecule type" value="Genomic_DNA"/>
</dbReference>
<dbReference type="RefSeq" id="WP_011785020.1">
    <property type="nucleotide sequence ID" value="NC_008740.1"/>
</dbReference>
<dbReference type="SMR" id="A1U0U9"/>
<dbReference type="STRING" id="351348.Maqu_1534"/>
<dbReference type="GeneID" id="31821213"/>
<dbReference type="KEGG" id="maq:Maqu_1534"/>
<dbReference type="eggNOG" id="COG0328">
    <property type="taxonomic scope" value="Bacteria"/>
</dbReference>
<dbReference type="HOGENOM" id="CLU_030894_6_0_6"/>
<dbReference type="OrthoDB" id="7845843at2"/>
<dbReference type="Proteomes" id="UP000000998">
    <property type="component" value="Chromosome"/>
</dbReference>
<dbReference type="GO" id="GO:0005737">
    <property type="term" value="C:cytoplasm"/>
    <property type="evidence" value="ECO:0007669"/>
    <property type="project" value="UniProtKB-SubCell"/>
</dbReference>
<dbReference type="GO" id="GO:0000287">
    <property type="term" value="F:magnesium ion binding"/>
    <property type="evidence" value="ECO:0007669"/>
    <property type="project" value="UniProtKB-UniRule"/>
</dbReference>
<dbReference type="GO" id="GO:0003676">
    <property type="term" value="F:nucleic acid binding"/>
    <property type="evidence" value="ECO:0007669"/>
    <property type="project" value="InterPro"/>
</dbReference>
<dbReference type="GO" id="GO:0004523">
    <property type="term" value="F:RNA-DNA hybrid ribonuclease activity"/>
    <property type="evidence" value="ECO:0007669"/>
    <property type="project" value="UniProtKB-UniRule"/>
</dbReference>
<dbReference type="GO" id="GO:0043137">
    <property type="term" value="P:DNA replication, removal of RNA primer"/>
    <property type="evidence" value="ECO:0007669"/>
    <property type="project" value="TreeGrafter"/>
</dbReference>
<dbReference type="CDD" id="cd09278">
    <property type="entry name" value="RNase_HI_prokaryote_like"/>
    <property type="match status" value="1"/>
</dbReference>
<dbReference type="FunFam" id="3.30.420.10:FF:000089">
    <property type="entry name" value="Ribonuclease H"/>
    <property type="match status" value="1"/>
</dbReference>
<dbReference type="Gene3D" id="3.30.420.10">
    <property type="entry name" value="Ribonuclease H-like superfamily/Ribonuclease H"/>
    <property type="match status" value="1"/>
</dbReference>
<dbReference type="HAMAP" id="MF_00042">
    <property type="entry name" value="RNase_H"/>
    <property type="match status" value="1"/>
</dbReference>
<dbReference type="InterPro" id="IPR050092">
    <property type="entry name" value="RNase_H"/>
</dbReference>
<dbReference type="InterPro" id="IPR012337">
    <property type="entry name" value="RNaseH-like_sf"/>
</dbReference>
<dbReference type="InterPro" id="IPR002156">
    <property type="entry name" value="RNaseH_domain"/>
</dbReference>
<dbReference type="InterPro" id="IPR036397">
    <property type="entry name" value="RNaseH_sf"/>
</dbReference>
<dbReference type="InterPro" id="IPR022892">
    <property type="entry name" value="RNaseHI"/>
</dbReference>
<dbReference type="NCBIfam" id="NF001236">
    <property type="entry name" value="PRK00203.1"/>
    <property type="match status" value="1"/>
</dbReference>
<dbReference type="PANTHER" id="PTHR10642">
    <property type="entry name" value="RIBONUCLEASE H1"/>
    <property type="match status" value="1"/>
</dbReference>
<dbReference type="PANTHER" id="PTHR10642:SF26">
    <property type="entry name" value="RIBONUCLEASE H1"/>
    <property type="match status" value="1"/>
</dbReference>
<dbReference type="Pfam" id="PF00075">
    <property type="entry name" value="RNase_H"/>
    <property type="match status" value="1"/>
</dbReference>
<dbReference type="SUPFAM" id="SSF53098">
    <property type="entry name" value="Ribonuclease H-like"/>
    <property type="match status" value="1"/>
</dbReference>
<dbReference type="PROSITE" id="PS50879">
    <property type="entry name" value="RNASE_H_1"/>
    <property type="match status" value="1"/>
</dbReference>
<protein>
    <recommendedName>
        <fullName evidence="1">Ribonuclease H</fullName>
        <shortName evidence="1">RNase H</shortName>
        <ecNumber evidence="1">3.1.26.4</ecNumber>
    </recommendedName>
</protein>
<gene>
    <name evidence="1" type="primary">rnhA</name>
    <name type="ordered locus">Maqu_1534</name>
</gene>
<feature type="chain" id="PRO_0000332625" description="Ribonuclease H">
    <location>
        <begin position="1"/>
        <end position="147"/>
    </location>
</feature>
<feature type="domain" description="RNase H type-1" evidence="2">
    <location>
        <begin position="1"/>
        <end position="142"/>
    </location>
</feature>
<feature type="binding site" evidence="1">
    <location>
        <position position="10"/>
    </location>
    <ligand>
        <name>Mg(2+)</name>
        <dbReference type="ChEBI" id="CHEBI:18420"/>
        <label>1</label>
    </ligand>
</feature>
<feature type="binding site" evidence="1">
    <location>
        <position position="10"/>
    </location>
    <ligand>
        <name>Mg(2+)</name>
        <dbReference type="ChEBI" id="CHEBI:18420"/>
        <label>2</label>
    </ligand>
</feature>
<feature type="binding site" evidence="1">
    <location>
        <position position="48"/>
    </location>
    <ligand>
        <name>Mg(2+)</name>
        <dbReference type="ChEBI" id="CHEBI:18420"/>
        <label>1</label>
    </ligand>
</feature>
<feature type="binding site" evidence="1">
    <location>
        <position position="70"/>
    </location>
    <ligand>
        <name>Mg(2+)</name>
        <dbReference type="ChEBI" id="CHEBI:18420"/>
        <label>1</label>
    </ligand>
</feature>
<feature type="binding site" evidence="1">
    <location>
        <position position="134"/>
    </location>
    <ligand>
        <name>Mg(2+)</name>
        <dbReference type="ChEBI" id="CHEBI:18420"/>
        <label>2</label>
    </ligand>
</feature>
<sequence length="147" mass="16425">MAGKVVMYTDGACKGNPGPGGWGVVLRYGDACKTMHGGELQTTNNRMELMAAIRGLRELKRACQVELYTDSQYVRKGITEWMSGWKRNGWKTSAKKPVKNADLWQELDAETARHTVNWHWVKGHSGHPDNELADELANRGVRELNGA</sequence>
<reference key="1">
    <citation type="journal article" date="2011" name="Appl. Environ. Microbiol.">
        <title>Genomic potential of Marinobacter aquaeolei, a biogeochemical 'opportunitroph'.</title>
        <authorList>
            <person name="Singer E."/>
            <person name="Webb E.A."/>
            <person name="Nelson W.C."/>
            <person name="Heidelberg J.F."/>
            <person name="Ivanova N."/>
            <person name="Pati A."/>
            <person name="Edwards K.J."/>
        </authorList>
    </citation>
    <scope>NUCLEOTIDE SEQUENCE [LARGE SCALE GENOMIC DNA]</scope>
    <source>
        <strain>ATCC 700491 / DSM 11845 / VT8</strain>
    </source>
</reference>
<keyword id="KW-0963">Cytoplasm</keyword>
<keyword id="KW-0255">Endonuclease</keyword>
<keyword id="KW-0378">Hydrolase</keyword>
<keyword id="KW-0460">Magnesium</keyword>
<keyword id="KW-0479">Metal-binding</keyword>
<keyword id="KW-0540">Nuclease</keyword>
<comment type="function">
    <text evidence="1">Endonuclease that specifically degrades the RNA of RNA-DNA hybrids.</text>
</comment>
<comment type="catalytic activity">
    <reaction evidence="1">
        <text>Endonucleolytic cleavage to 5'-phosphomonoester.</text>
        <dbReference type="EC" id="3.1.26.4"/>
    </reaction>
</comment>
<comment type="cofactor">
    <cofactor evidence="1">
        <name>Mg(2+)</name>
        <dbReference type="ChEBI" id="CHEBI:18420"/>
    </cofactor>
    <text evidence="1">Binds 1 Mg(2+) ion per subunit. May bind a second metal ion at a regulatory site, or after substrate binding.</text>
</comment>
<comment type="subunit">
    <text evidence="1">Monomer.</text>
</comment>
<comment type="subcellular location">
    <subcellularLocation>
        <location evidence="1">Cytoplasm</location>
    </subcellularLocation>
</comment>
<comment type="similarity">
    <text evidence="1">Belongs to the RNase H family.</text>
</comment>
<accession>A1U0U9</accession>
<organism>
    <name type="scientific">Marinobacter nauticus (strain ATCC 700491 / DSM 11845 / VT8)</name>
    <name type="common">Marinobacter aquaeolei</name>
    <dbReference type="NCBI Taxonomy" id="351348"/>
    <lineage>
        <taxon>Bacteria</taxon>
        <taxon>Pseudomonadati</taxon>
        <taxon>Pseudomonadota</taxon>
        <taxon>Gammaproteobacteria</taxon>
        <taxon>Pseudomonadales</taxon>
        <taxon>Marinobacteraceae</taxon>
        <taxon>Marinobacter</taxon>
    </lineage>
</organism>